<comment type="subcellular location">
    <subcellularLocation>
        <location evidence="4">Cell membrane</location>
        <topology evidence="4">Multi-pass membrane protein</topology>
    </subcellularLocation>
    <subcellularLocation>
        <location evidence="3">Cell tip</location>
    </subcellularLocation>
</comment>
<comment type="similarity">
    <text evidence="4">Belongs to the ThrE exporter (TC 2.A.79) family.</text>
</comment>
<sequence>MGVQLKLDPNSKNWLRQPDQQPIQDSICTLPGPGSLLKKKIRKTEFRIDNGLLGNTSPIINVESKIPFHRRANSTPEESRKRVSFSLTSNDGAKSDRSSQKSSNSRKSIRSQSRSRSSSVGSDSQASIQSGTNSEVVSDDEEDGNFASIPELHEDNEYHSNLATSSNPFSDGSSSKSASLTASSAAASPTVSFSPASTSENLTPTSSKSLASNTSLVQSFNSASRSSSISGNQYTYNLLGKSTDESPKITISAGTSMSHFPSASSKLIQMRRHAHMNSEKCDPELLSHNEYFPMMKRGFISRFLCLFVSRDANVYIGPLESSHAKPYRPFGSFVSRFTNRVASDLESQIPDALEAVLTQNNDYDFNSFLHNMGYSRCYVDENYHITIHVSSYERRVEFMLAVCEAMMLYGSPSHKIQQSLRIASRILQLPATFLYLPDCMFVYFKKLEQYSPDVFVVRVTSQTDLNRMVLVNEIFRRVMRDKLSAEDGTEVLRNITSFRPLYRDWLVAFMHGVASASILPVVYGGGWRDMLIGFVLGLLLGIFRVYINPRFFLFDSLFEVIISIILSFLGRAFGSISRYDKPVFCFAALVEGAITLILPGYVVFCGVLELQSKNIVAGGVRMLYAVIFSLFLSFGITIGSALYGWMDKDATDADTCMSIIAVSPYWYILLIPIFTLSLLIVTQSHPRQWPIQMFVACCGYVVYYFSSLHFGASQISSAIGSFAVGCLGNMYSHFIKSSSFAVVLPAIFVLVPSGFAAQGGVSAGLDTASQITSKNTTTNTTTVTTENSQNSSLEFGFTMVEIAIGIAIGFLASSLTVYPFFGYRRKNMML</sequence>
<evidence type="ECO:0000255" key="1"/>
<evidence type="ECO:0000256" key="2">
    <source>
        <dbReference type="SAM" id="MobiDB-lite"/>
    </source>
</evidence>
<evidence type="ECO:0000269" key="3">
    <source>
    </source>
</evidence>
<evidence type="ECO:0000305" key="4"/>
<keyword id="KW-1003">Cell membrane</keyword>
<keyword id="KW-0472">Membrane</keyword>
<keyword id="KW-1185">Reference proteome</keyword>
<keyword id="KW-0812">Transmembrane</keyword>
<keyword id="KW-1133">Transmembrane helix</keyword>
<organism>
    <name type="scientific">Schizosaccharomyces pombe (strain 972 / ATCC 24843)</name>
    <name type="common">Fission yeast</name>
    <dbReference type="NCBI Taxonomy" id="284812"/>
    <lineage>
        <taxon>Eukaryota</taxon>
        <taxon>Fungi</taxon>
        <taxon>Dikarya</taxon>
        <taxon>Ascomycota</taxon>
        <taxon>Taphrinomycotina</taxon>
        <taxon>Schizosaccharomycetes</taxon>
        <taxon>Schizosaccharomycetales</taxon>
        <taxon>Schizosaccharomycetaceae</taxon>
        <taxon>Schizosaccharomyces</taxon>
    </lineage>
</organism>
<feature type="chain" id="PRO_0000116642" description="Uncharacterized protein C16A10.01">
    <location>
        <begin position="1"/>
        <end position="830"/>
    </location>
</feature>
<feature type="transmembrane region" description="Helical" evidence="1">
    <location>
        <begin position="505"/>
        <end position="525"/>
    </location>
</feature>
<feature type="transmembrane region" description="Helical" evidence="1">
    <location>
        <begin position="529"/>
        <end position="549"/>
    </location>
</feature>
<feature type="transmembrane region" description="Helical" evidence="1">
    <location>
        <begin position="551"/>
        <end position="571"/>
    </location>
</feature>
<feature type="transmembrane region" description="Helical" evidence="1">
    <location>
        <begin position="584"/>
        <end position="604"/>
    </location>
</feature>
<feature type="transmembrane region" description="Helical" evidence="1">
    <location>
        <begin position="622"/>
        <end position="642"/>
    </location>
</feature>
<feature type="transmembrane region" description="Helical" evidence="1">
    <location>
        <begin position="659"/>
        <end position="679"/>
    </location>
</feature>
<feature type="transmembrane region" description="Helical" evidence="1">
    <location>
        <begin position="691"/>
        <end position="711"/>
    </location>
</feature>
<feature type="transmembrane region" description="Helical" evidence="1">
    <location>
        <begin position="715"/>
        <end position="735"/>
    </location>
</feature>
<feature type="transmembrane region" description="Helical" evidence="1">
    <location>
        <begin position="740"/>
        <end position="760"/>
    </location>
</feature>
<feature type="transmembrane region" description="Helical" evidence="1">
    <location>
        <begin position="802"/>
        <end position="822"/>
    </location>
</feature>
<feature type="region of interest" description="Disordered" evidence="2">
    <location>
        <begin position="1"/>
        <end position="28"/>
    </location>
</feature>
<feature type="region of interest" description="Disordered" evidence="2">
    <location>
        <begin position="70"/>
        <end position="147"/>
    </location>
</feature>
<feature type="region of interest" description="Disordered" evidence="2">
    <location>
        <begin position="186"/>
        <end position="210"/>
    </location>
</feature>
<feature type="compositionally biased region" description="Polar residues" evidence="2">
    <location>
        <begin position="10"/>
        <end position="27"/>
    </location>
</feature>
<feature type="compositionally biased region" description="Low complexity" evidence="2">
    <location>
        <begin position="100"/>
        <end position="130"/>
    </location>
</feature>
<feature type="compositionally biased region" description="Low complexity" evidence="2">
    <location>
        <begin position="186"/>
        <end position="199"/>
    </location>
</feature>
<feature type="compositionally biased region" description="Polar residues" evidence="2">
    <location>
        <begin position="200"/>
        <end position="210"/>
    </location>
</feature>
<name>YDN1_SCHPO</name>
<dbReference type="EMBL" id="CU329670">
    <property type="protein sequence ID" value="CAB10002.1"/>
    <property type="molecule type" value="Genomic_DNA"/>
</dbReference>
<dbReference type="EMBL" id="AB027818">
    <property type="protein sequence ID" value="BAA87122.1"/>
    <property type="molecule type" value="Genomic_DNA"/>
</dbReference>
<dbReference type="PIR" id="T37766">
    <property type="entry name" value="T37766"/>
</dbReference>
<dbReference type="RefSeq" id="NP_594041.1">
    <property type="nucleotide sequence ID" value="NM_001019466.2"/>
</dbReference>
<dbReference type="BioGRID" id="278783">
    <property type="interactions" value="1"/>
</dbReference>
<dbReference type="FunCoup" id="P87293">
    <property type="interactions" value="3"/>
</dbReference>
<dbReference type="iPTMnet" id="P87293"/>
<dbReference type="PaxDb" id="4896-SPAC16A10.01.1"/>
<dbReference type="EnsemblFungi" id="SPAC16A10.01.1">
    <property type="protein sequence ID" value="SPAC16A10.01.1:pep"/>
    <property type="gene ID" value="SPAC16A10.01"/>
</dbReference>
<dbReference type="KEGG" id="spo:2542317"/>
<dbReference type="PomBase" id="SPAC16A10.01"/>
<dbReference type="VEuPathDB" id="FungiDB:SPAC16A10.01"/>
<dbReference type="eggNOG" id="ENOG502QPMM">
    <property type="taxonomic scope" value="Eukaryota"/>
</dbReference>
<dbReference type="HOGENOM" id="CLU_007078_3_0_1"/>
<dbReference type="InParanoid" id="P87293"/>
<dbReference type="OMA" id="CETLMLY"/>
<dbReference type="PhylomeDB" id="P87293"/>
<dbReference type="PRO" id="PR:P87293"/>
<dbReference type="Proteomes" id="UP000002485">
    <property type="component" value="Chromosome I"/>
</dbReference>
<dbReference type="GO" id="GO:0032153">
    <property type="term" value="C:cell division site"/>
    <property type="evidence" value="ECO:0007005"/>
    <property type="project" value="PomBase"/>
</dbReference>
<dbReference type="GO" id="GO:0051286">
    <property type="term" value="C:cell tip"/>
    <property type="evidence" value="ECO:0007005"/>
    <property type="project" value="PomBase"/>
</dbReference>
<dbReference type="GO" id="GO:0005886">
    <property type="term" value="C:plasma membrane"/>
    <property type="evidence" value="ECO:0000305"/>
    <property type="project" value="PomBase"/>
</dbReference>
<dbReference type="GO" id="GO:0015171">
    <property type="term" value="F:amino acid transmembrane transporter activity"/>
    <property type="evidence" value="ECO:0000255"/>
    <property type="project" value="PomBase"/>
</dbReference>
<dbReference type="InterPro" id="IPR010619">
    <property type="entry name" value="ThrE-like_N"/>
</dbReference>
<dbReference type="InterPro" id="IPR051361">
    <property type="entry name" value="ThrE/Ser_Exporter"/>
</dbReference>
<dbReference type="InterPro" id="IPR024528">
    <property type="entry name" value="ThrE_2"/>
</dbReference>
<dbReference type="PANTHER" id="PTHR31082:SF13">
    <property type="entry name" value="DUF1212 FAMILY PROTEIN"/>
    <property type="match status" value="1"/>
</dbReference>
<dbReference type="PANTHER" id="PTHR31082">
    <property type="entry name" value="PHEROMONE-REGULATED MEMBRANE PROTEIN 10"/>
    <property type="match status" value="1"/>
</dbReference>
<dbReference type="Pfam" id="PF06738">
    <property type="entry name" value="ThrE"/>
    <property type="match status" value="1"/>
</dbReference>
<dbReference type="Pfam" id="PF12821">
    <property type="entry name" value="ThrE_2"/>
    <property type="match status" value="1"/>
</dbReference>
<gene>
    <name type="ORF">SPAC16A10.01</name>
</gene>
<protein>
    <recommendedName>
        <fullName>Uncharacterized protein C16A10.01</fullName>
    </recommendedName>
</protein>
<proteinExistence type="inferred from homology"/>
<accession>P87293</accession>
<accession>Q9USE6</accession>
<reference key="1">
    <citation type="journal article" date="2002" name="Nature">
        <title>The genome sequence of Schizosaccharomyces pombe.</title>
        <authorList>
            <person name="Wood V."/>
            <person name="Gwilliam R."/>
            <person name="Rajandream M.A."/>
            <person name="Lyne M.H."/>
            <person name="Lyne R."/>
            <person name="Stewart A."/>
            <person name="Sgouros J.G."/>
            <person name="Peat N."/>
            <person name="Hayles J."/>
            <person name="Baker S.G."/>
            <person name="Basham D."/>
            <person name="Bowman S."/>
            <person name="Brooks K."/>
            <person name="Brown D."/>
            <person name="Brown S."/>
            <person name="Chillingworth T."/>
            <person name="Churcher C.M."/>
            <person name="Collins M."/>
            <person name="Connor R."/>
            <person name="Cronin A."/>
            <person name="Davis P."/>
            <person name="Feltwell T."/>
            <person name="Fraser A."/>
            <person name="Gentles S."/>
            <person name="Goble A."/>
            <person name="Hamlin N."/>
            <person name="Harris D.E."/>
            <person name="Hidalgo J."/>
            <person name="Hodgson G."/>
            <person name="Holroyd S."/>
            <person name="Hornsby T."/>
            <person name="Howarth S."/>
            <person name="Huckle E.J."/>
            <person name="Hunt S."/>
            <person name="Jagels K."/>
            <person name="James K.D."/>
            <person name="Jones L."/>
            <person name="Jones M."/>
            <person name="Leather S."/>
            <person name="McDonald S."/>
            <person name="McLean J."/>
            <person name="Mooney P."/>
            <person name="Moule S."/>
            <person name="Mungall K.L."/>
            <person name="Murphy L.D."/>
            <person name="Niblett D."/>
            <person name="Odell C."/>
            <person name="Oliver K."/>
            <person name="O'Neil S."/>
            <person name="Pearson D."/>
            <person name="Quail M.A."/>
            <person name="Rabbinowitsch E."/>
            <person name="Rutherford K.M."/>
            <person name="Rutter S."/>
            <person name="Saunders D."/>
            <person name="Seeger K."/>
            <person name="Sharp S."/>
            <person name="Skelton J."/>
            <person name="Simmonds M.N."/>
            <person name="Squares R."/>
            <person name="Squares S."/>
            <person name="Stevens K."/>
            <person name="Taylor K."/>
            <person name="Taylor R.G."/>
            <person name="Tivey A."/>
            <person name="Walsh S.V."/>
            <person name="Warren T."/>
            <person name="Whitehead S."/>
            <person name="Woodward J.R."/>
            <person name="Volckaert G."/>
            <person name="Aert R."/>
            <person name="Robben J."/>
            <person name="Grymonprez B."/>
            <person name="Weltjens I."/>
            <person name="Vanstreels E."/>
            <person name="Rieger M."/>
            <person name="Schaefer M."/>
            <person name="Mueller-Auer S."/>
            <person name="Gabel C."/>
            <person name="Fuchs M."/>
            <person name="Duesterhoeft A."/>
            <person name="Fritzc C."/>
            <person name="Holzer E."/>
            <person name="Moestl D."/>
            <person name="Hilbert H."/>
            <person name="Borzym K."/>
            <person name="Langer I."/>
            <person name="Beck A."/>
            <person name="Lehrach H."/>
            <person name="Reinhardt R."/>
            <person name="Pohl T.M."/>
            <person name="Eger P."/>
            <person name="Zimmermann W."/>
            <person name="Wedler H."/>
            <person name="Wambutt R."/>
            <person name="Purnelle B."/>
            <person name="Goffeau A."/>
            <person name="Cadieu E."/>
            <person name="Dreano S."/>
            <person name="Gloux S."/>
            <person name="Lelaure V."/>
            <person name="Mottier S."/>
            <person name="Galibert F."/>
            <person name="Aves S.J."/>
            <person name="Xiang Z."/>
            <person name="Hunt C."/>
            <person name="Moore K."/>
            <person name="Hurst S.M."/>
            <person name="Lucas M."/>
            <person name="Rochet M."/>
            <person name="Gaillardin C."/>
            <person name="Tallada V.A."/>
            <person name="Garzon A."/>
            <person name="Thode G."/>
            <person name="Daga R.R."/>
            <person name="Cruzado L."/>
            <person name="Jimenez J."/>
            <person name="Sanchez M."/>
            <person name="del Rey F."/>
            <person name="Benito J."/>
            <person name="Dominguez A."/>
            <person name="Revuelta J.L."/>
            <person name="Moreno S."/>
            <person name="Armstrong J."/>
            <person name="Forsburg S.L."/>
            <person name="Cerutti L."/>
            <person name="Lowe T."/>
            <person name="McCombie W.R."/>
            <person name="Paulsen I."/>
            <person name="Potashkin J."/>
            <person name="Shpakovski G.V."/>
            <person name="Ussery D."/>
            <person name="Barrell B.G."/>
            <person name="Nurse P."/>
        </authorList>
    </citation>
    <scope>NUCLEOTIDE SEQUENCE [LARGE SCALE GENOMIC DNA]</scope>
    <source>
        <strain>972 / ATCC 24843</strain>
    </source>
</reference>
<reference key="2">
    <citation type="journal article" date="2000" name="Genes Cells">
        <title>Large-scale screening of intracellular protein localization in living fission yeast cells by the use of a GFP-fusion genomic DNA library.</title>
        <authorList>
            <person name="Ding D.-Q."/>
            <person name="Tomita Y."/>
            <person name="Yamamoto A."/>
            <person name="Chikashige Y."/>
            <person name="Haraguchi T."/>
            <person name="Hiraoka Y."/>
        </authorList>
    </citation>
    <scope>NUCLEOTIDE SEQUENCE [LARGE SCALE GENOMIC DNA] OF 1-111</scope>
    <source>
        <strain>ATCC 38364 / 968</strain>
    </source>
</reference>
<reference key="3">
    <citation type="journal article" date="2006" name="Nat. Biotechnol.">
        <title>ORFeome cloning and global analysis of protein localization in the fission yeast Schizosaccharomyces pombe.</title>
        <authorList>
            <person name="Matsuyama A."/>
            <person name="Arai R."/>
            <person name="Yashiroda Y."/>
            <person name="Shirai A."/>
            <person name="Kamata A."/>
            <person name="Sekido S."/>
            <person name="Kobayashi Y."/>
            <person name="Hashimoto A."/>
            <person name="Hamamoto M."/>
            <person name="Hiraoka Y."/>
            <person name="Horinouchi S."/>
            <person name="Yoshida M."/>
        </authorList>
    </citation>
    <scope>SUBCELLULAR LOCATION [LARGE SCALE ANALYSIS]</scope>
</reference>